<evidence type="ECO:0000255" key="1">
    <source>
        <dbReference type="HAMAP-Rule" id="MF_00434"/>
    </source>
</evidence>
<feature type="chain" id="PRO_1000192922" description="Putative pterin-4-alpha-carbinolamine dehydratase">
    <location>
        <begin position="1"/>
        <end position="100"/>
    </location>
</feature>
<organism>
    <name type="scientific">Afipia carboxidovorans (strain ATCC 49405 / DSM 1227 / KCTC 32145 / OM5)</name>
    <name type="common">Oligotropha carboxidovorans</name>
    <dbReference type="NCBI Taxonomy" id="504832"/>
    <lineage>
        <taxon>Bacteria</taxon>
        <taxon>Pseudomonadati</taxon>
        <taxon>Pseudomonadota</taxon>
        <taxon>Alphaproteobacteria</taxon>
        <taxon>Hyphomicrobiales</taxon>
        <taxon>Nitrobacteraceae</taxon>
        <taxon>Afipia</taxon>
    </lineage>
</organism>
<name>PHS_AFIC5</name>
<keyword id="KW-0456">Lyase</keyword>
<keyword id="KW-1185">Reference proteome</keyword>
<comment type="catalytic activity">
    <reaction evidence="1">
        <text>(4aS,6R)-4a-hydroxy-L-erythro-5,6,7,8-tetrahydrobiopterin = (6R)-L-erythro-6,7-dihydrobiopterin + H2O</text>
        <dbReference type="Rhea" id="RHEA:11920"/>
        <dbReference type="ChEBI" id="CHEBI:15377"/>
        <dbReference type="ChEBI" id="CHEBI:15642"/>
        <dbReference type="ChEBI" id="CHEBI:43120"/>
        <dbReference type="EC" id="4.2.1.96"/>
    </reaction>
</comment>
<comment type="similarity">
    <text evidence="1">Belongs to the pterin-4-alpha-carbinolamine dehydratase family.</text>
</comment>
<protein>
    <recommendedName>
        <fullName evidence="1">Putative pterin-4-alpha-carbinolamine dehydratase</fullName>
        <shortName evidence="1">PHS</shortName>
        <ecNumber evidence="1">4.2.1.96</ecNumber>
    </recommendedName>
    <alternativeName>
        <fullName evidence="1">4-alpha-hydroxy-tetrahydropterin dehydratase</fullName>
    </alternativeName>
    <alternativeName>
        <fullName evidence="1">Pterin carbinolamine dehydratase</fullName>
        <shortName evidence="1">PCD</shortName>
    </alternativeName>
</protein>
<proteinExistence type="inferred from homology"/>
<sequence>MGDLLSDEARRAALVELPGWREADGGKAFTRTFTFRNFNEAFGFMTRAALVAEKNDHHPDWRNVYKTVEVNLSTHDAGGITARDVALAKKMNEIAARFGI</sequence>
<reference key="1">
    <citation type="journal article" date="2008" name="J. Bacteriol.">
        <title>Genome sequence of the chemolithoautotrophic bacterium Oligotropha carboxidovorans OM5T.</title>
        <authorList>
            <person name="Paul D."/>
            <person name="Bridges S."/>
            <person name="Burgess S.C."/>
            <person name="Dandass Y."/>
            <person name="Lawrence M.L."/>
        </authorList>
    </citation>
    <scope>NUCLEOTIDE SEQUENCE [LARGE SCALE GENOMIC DNA]</scope>
    <source>
        <strain>ATCC 49405 / DSM 1227 / KCTC 32145 / OM5</strain>
    </source>
</reference>
<reference key="2">
    <citation type="journal article" date="2011" name="J. Bacteriol.">
        <title>Complete genome sequences of the chemolithoautotrophic Oligotropha carboxidovorans strains OM4 and OM5.</title>
        <authorList>
            <person name="Volland S."/>
            <person name="Rachinger M."/>
            <person name="Strittmatter A."/>
            <person name="Daniel R."/>
            <person name="Gottschalk G."/>
            <person name="Meyer O."/>
        </authorList>
    </citation>
    <scope>NUCLEOTIDE SEQUENCE [LARGE SCALE GENOMIC DNA]</scope>
    <source>
        <strain>ATCC 49405 / DSM 1227 / KCTC 32145 / OM5</strain>
    </source>
</reference>
<accession>B6JAT9</accession>
<accession>F8BSS3</accession>
<gene>
    <name type="ordered locus">OCAR_4303</name>
    <name type="ordered locus">OCA5_c02210</name>
</gene>
<dbReference type="EC" id="4.2.1.96" evidence="1"/>
<dbReference type="EMBL" id="CP001196">
    <property type="protein sequence ID" value="ACI91452.1"/>
    <property type="molecule type" value="Genomic_DNA"/>
</dbReference>
<dbReference type="EMBL" id="CP002826">
    <property type="protein sequence ID" value="AEI04950.1"/>
    <property type="molecule type" value="Genomic_DNA"/>
</dbReference>
<dbReference type="RefSeq" id="WP_012561483.1">
    <property type="nucleotide sequence ID" value="NC_015684.1"/>
</dbReference>
<dbReference type="SMR" id="B6JAT9"/>
<dbReference type="STRING" id="504832.OCA5_c02210"/>
<dbReference type="KEGG" id="oca:OCAR_4303"/>
<dbReference type="KEGG" id="ocg:OCA5_c02210"/>
<dbReference type="PATRIC" id="fig|504832.7.peg.231"/>
<dbReference type="eggNOG" id="COG2154">
    <property type="taxonomic scope" value="Bacteria"/>
</dbReference>
<dbReference type="HOGENOM" id="CLU_081974_3_2_5"/>
<dbReference type="OrthoDB" id="9794987at2"/>
<dbReference type="Proteomes" id="UP000007730">
    <property type="component" value="Chromosome"/>
</dbReference>
<dbReference type="GO" id="GO:0008124">
    <property type="term" value="F:4-alpha-hydroxytetrahydrobiopterin dehydratase activity"/>
    <property type="evidence" value="ECO:0007669"/>
    <property type="project" value="UniProtKB-UniRule"/>
</dbReference>
<dbReference type="GO" id="GO:0006729">
    <property type="term" value="P:tetrahydrobiopterin biosynthetic process"/>
    <property type="evidence" value="ECO:0007669"/>
    <property type="project" value="InterPro"/>
</dbReference>
<dbReference type="CDD" id="cd00914">
    <property type="entry name" value="PCD_DCoH_subfamily_b"/>
    <property type="match status" value="1"/>
</dbReference>
<dbReference type="Gene3D" id="3.30.1360.20">
    <property type="entry name" value="Transcriptional coactivator/pterin dehydratase"/>
    <property type="match status" value="1"/>
</dbReference>
<dbReference type="HAMAP" id="MF_00434">
    <property type="entry name" value="Pterin_4_alpha"/>
    <property type="match status" value="1"/>
</dbReference>
<dbReference type="InterPro" id="IPR036428">
    <property type="entry name" value="PCD_sf"/>
</dbReference>
<dbReference type="InterPro" id="IPR001533">
    <property type="entry name" value="Pterin_deHydtase"/>
</dbReference>
<dbReference type="NCBIfam" id="NF002017">
    <property type="entry name" value="PRK00823.1-2"/>
    <property type="match status" value="1"/>
</dbReference>
<dbReference type="NCBIfam" id="NF002018">
    <property type="entry name" value="PRK00823.1-3"/>
    <property type="match status" value="1"/>
</dbReference>
<dbReference type="PANTHER" id="PTHR12599">
    <property type="entry name" value="PTERIN-4-ALPHA-CARBINOLAMINE DEHYDRATASE"/>
    <property type="match status" value="1"/>
</dbReference>
<dbReference type="PANTHER" id="PTHR12599:SF0">
    <property type="entry name" value="PTERIN-4-ALPHA-CARBINOLAMINE DEHYDRATASE"/>
    <property type="match status" value="1"/>
</dbReference>
<dbReference type="Pfam" id="PF01329">
    <property type="entry name" value="Pterin_4a"/>
    <property type="match status" value="1"/>
</dbReference>
<dbReference type="SUPFAM" id="SSF55248">
    <property type="entry name" value="PCD-like"/>
    <property type="match status" value="1"/>
</dbReference>